<comment type="function">
    <text evidence="1">Catalyzes the NAD(H)-dependent interconversion of D-fructose 6-phosphate and D-mannitol 1-phosphate in the mannitol metabolic pathway.</text>
</comment>
<comment type="catalytic activity">
    <reaction>
        <text>D-mannitol 1-phosphate + NAD(+) = beta-D-fructose 6-phosphate + NADH + H(+)</text>
        <dbReference type="Rhea" id="RHEA:19661"/>
        <dbReference type="ChEBI" id="CHEBI:15378"/>
        <dbReference type="ChEBI" id="CHEBI:57540"/>
        <dbReference type="ChEBI" id="CHEBI:57634"/>
        <dbReference type="ChEBI" id="CHEBI:57945"/>
        <dbReference type="ChEBI" id="CHEBI:61381"/>
        <dbReference type="EC" id="1.1.1.17"/>
    </reaction>
</comment>
<comment type="subunit">
    <text evidence="1">Monomer.</text>
</comment>
<comment type="similarity">
    <text evidence="2">Belongs to the mannitol dehydrogenase family.</text>
</comment>
<proteinExistence type="inferred from homology"/>
<feature type="chain" id="PRO_0000371535" description="Mannitol-1-phosphate 5-dehydrogenase">
    <location>
        <begin position="1"/>
        <end position="397"/>
    </location>
</feature>
<feature type="active site" evidence="1">
    <location>
        <position position="220"/>
    </location>
</feature>
<feature type="binding site" evidence="1">
    <location>
        <begin position="9"/>
        <end position="20"/>
    </location>
    <ligand>
        <name>NAD(+)</name>
        <dbReference type="ChEBI" id="CHEBI:57540"/>
    </ligand>
</feature>
<organism>
    <name type="scientific">Podospora anserina (strain S / ATCC MYA-4624 / DSM 980 / FGSC 10383)</name>
    <name type="common">Pleurage anserina</name>
    <dbReference type="NCBI Taxonomy" id="515849"/>
    <lineage>
        <taxon>Eukaryota</taxon>
        <taxon>Fungi</taxon>
        <taxon>Dikarya</taxon>
        <taxon>Ascomycota</taxon>
        <taxon>Pezizomycotina</taxon>
        <taxon>Sordariomycetes</taxon>
        <taxon>Sordariomycetidae</taxon>
        <taxon>Sordariales</taxon>
        <taxon>Podosporaceae</taxon>
        <taxon>Podospora</taxon>
        <taxon>Podospora anserina</taxon>
    </lineage>
</organism>
<reference key="1">
    <citation type="journal article" date="2008" name="Genome Biol.">
        <title>The genome sequence of the model ascomycete fungus Podospora anserina.</title>
        <authorList>
            <person name="Espagne E."/>
            <person name="Lespinet O."/>
            <person name="Malagnac F."/>
            <person name="Da Silva C."/>
            <person name="Jaillon O."/>
            <person name="Porcel B.M."/>
            <person name="Couloux A."/>
            <person name="Aury J.-M."/>
            <person name="Segurens B."/>
            <person name="Poulain J."/>
            <person name="Anthouard V."/>
            <person name="Grossetete S."/>
            <person name="Khalili H."/>
            <person name="Coppin E."/>
            <person name="Dequard-Chablat M."/>
            <person name="Picard M."/>
            <person name="Contamine V."/>
            <person name="Arnaise S."/>
            <person name="Bourdais A."/>
            <person name="Berteaux-Lecellier V."/>
            <person name="Gautheret D."/>
            <person name="de Vries R.P."/>
            <person name="Battaglia E."/>
            <person name="Coutinho P.M."/>
            <person name="Danchin E.G.J."/>
            <person name="Henrissat B."/>
            <person name="El Khoury R."/>
            <person name="Sainsard-Chanet A."/>
            <person name="Boivin A."/>
            <person name="Pinan-Lucarre B."/>
            <person name="Sellem C.H."/>
            <person name="Debuchy R."/>
            <person name="Wincker P."/>
            <person name="Weissenbach J."/>
            <person name="Silar P."/>
        </authorList>
    </citation>
    <scope>NUCLEOTIDE SEQUENCE [LARGE SCALE GENOMIC DNA]</scope>
    <source>
        <strain>S / ATCC MYA-4624 / DSM 980 / FGSC 10383</strain>
    </source>
</reference>
<reference key="2">
    <citation type="journal article" date="2014" name="Genetics">
        <title>Maintaining two mating types: Structure of the mating type locus and its role in heterokaryosis in Podospora anserina.</title>
        <authorList>
            <person name="Grognet P."/>
            <person name="Bidard F."/>
            <person name="Kuchly C."/>
            <person name="Tong L.C.H."/>
            <person name="Coppin E."/>
            <person name="Benkhali J.A."/>
            <person name="Couloux A."/>
            <person name="Wincker P."/>
            <person name="Debuchy R."/>
            <person name="Silar P."/>
        </authorList>
    </citation>
    <scope>GENOME REANNOTATION</scope>
    <source>
        <strain>S / ATCC MYA-4624 / DSM 980 / FGSC 10383</strain>
    </source>
</reference>
<accession>B2AND4</accession>
<accession>A0A090DAH0</accession>
<evidence type="ECO:0000250" key="1"/>
<evidence type="ECO:0000305" key="2"/>
<protein>
    <recommendedName>
        <fullName>Mannitol-1-phosphate 5-dehydrogenase</fullName>
        <shortName>M1PDH</shortName>
        <shortName>MPD</shortName>
        <shortName>MPDH</shortName>
        <ecNumber>1.1.1.17</ecNumber>
    </recommendedName>
</protein>
<sequence>MERNTPKKAVHFGAGNIGRGFVACFLHESGYEVIFAEVNDATVSKLNTHKSYKVIEVGAEGTTEKTITNYRAINSRSNEAALVEEIATADVVTCSVGPNILKFLAPVIAKGLAARSTDLTPAAVIACENAIGATDTLAEFIKSPENTNPALLEDYDKRATFANSAIDRIVPAQDPDAGLDVKLEKFYEWVVEKTPFKEWAVPDIKGIKWVDNLQPFIERKLYTVNTGHATAAYYGYTRRKSTVYDALQDKDIRDEVKNALKETADLITEKHGIDEEEQKQYVDKIVRRISNPHLEDAVERVGRAPLRKLSRKERFIGPAAELAENGKDCSALLDAAEMAFRFQNVEGDDESFELAKIMEEKKPEEVVQEVCGLQPSEKLYPQVVDIVKRVQADSNEE</sequence>
<dbReference type="EC" id="1.1.1.17"/>
<dbReference type="EMBL" id="CU633872">
    <property type="protein sequence ID" value="CAP65533.1"/>
    <property type="molecule type" value="Genomic_DNA"/>
</dbReference>
<dbReference type="EMBL" id="FO904941">
    <property type="protein sequence ID" value="CDP31528.1"/>
    <property type="molecule type" value="Genomic_DNA"/>
</dbReference>
<dbReference type="RefSeq" id="XP_003437448.1">
    <property type="nucleotide sequence ID" value="XM_003437400.1"/>
</dbReference>
<dbReference type="SMR" id="B2AND4"/>
<dbReference type="FunCoup" id="B2AND4">
    <property type="interactions" value="44"/>
</dbReference>
<dbReference type="STRING" id="515849.B2AND4"/>
<dbReference type="GeneID" id="11176499"/>
<dbReference type="KEGG" id="pan:PODANS72p234"/>
<dbReference type="VEuPathDB" id="FungiDB:PODANS_6_10260"/>
<dbReference type="eggNOG" id="ENOG502QVPN">
    <property type="taxonomic scope" value="Eukaryota"/>
</dbReference>
<dbReference type="HOGENOM" id="CLU_036089_0_1_1"/>
<dbReference type="InParanoid" id="B2AND4"/>
<dbReference type="OrthoDB" id="418169at2759"/>
<dbReference type="Proteomes" id="UP000001197">
    <property type="component" value="Chromosome 6"/>
</dbReference>
<dbReference type="GO" id="GO:0005829">
    <property type="term" value="C:cytosol"/>
    <property type="evidence" value="ECO:0007669"/>
    <property type="project" value="TreeGrafter"/>
</dbReference>
<dbReference type="GO" id="GO:0008926">
    <property type="term" value="F:mannitol-1-phosphate 5-dehydrogenase activity"/>
    <property type="evidence" value="ECO:0007669"/>
    <property type="project" value="UniProtKB-EC"/>
</dbReference>
<dbReference type="GO" id="GO:0019592">
    <property type="term" value="P:mannitol catabolic process"/>
    <property type="evidence" value="ECO:0007669"/>
    <property type="project" value="TreeGrafter"/>
</dbReference>
<dbReference type="Gene3D" id="1.10.1040.10">
    <property type="entry name" value="N-(1-d-carboxylethyl)-l-norvaline Dehydrogenase, domain 2"/>
    <property type="match status" value="1"/>
</dbReference>
<dbReference type="Gene3D" id="3.40.50.720">
    <property type="entry name" value="NAD(P)-binding Rossmann-like Domain"/>
    <property type="match status" value="1"/>
</dbReference>
<dbReference type="HAMAP" id="MF_00196">
    <property type="entry name" value="Mannitol_dehydrog"/>
    <property type="match status" value="1"/>
</dbReference>
<dbReference type="InterPro" id="IPR008927">
    <property type="entry name" value="6-PGluconate_DH-like_C_sf"/>
</dbReference>
<dbReference type="InterPro" id="IPR013328">
    <property type="entry name" value="6PGD_dom2"/>
</dbReference>
<dbReference type="InterPro" id="IPR023028">
    <property type="entry name" value="Mannitol_1_phos_5_DH"/>
</dbReference>
<dbReference type="InterPro" id="IPR000669">
    <property type="entry name" value="Mannitol_DH"/>
</dbReference>
<dbReference type="InterPro" id="IPR013118">
    <property type="entry name" value="Mannitol_DH_C"/>
</dbReference>
<dbReference type="InterPro" id="IPR013131">
    <property type="entry name" value="Mannitol_DH_N"/>
</dbReference>
<dbReference type="InterPro" id="IPR036291">
    <property type="entry name" value="NAD(P)-bd_dom_sf"/>
</dbReference>
<dbReference type="NCBIfam" id="NF002652">
    <property type="entry name" value="PRK02318.2-5"/>
    <property type="match status" value="1"/>
</dbReference>
<dbReference type="PANTHER" id="PTHR30524:SF0">
    <property type="entry name" value="ALTRONATE OXIDOREDUCTASE-RELATED"/>
    <property type="match status" value="1"/>
</dbReference>
<dbReference type="PANTHER" id="PTHR30524">
    <property type="entry name" value="MANNITOL-1-PHOSPHATE 5-DEHYDROGENASE"/>
    <property type="match status" value="1"/>
</dbReference>
<dbReference type="Pfam" id="PF01232">
    <property type="entry name" value="Mannitol_dh"/>
    <property type="match status" value="1"/>
</dbReference>
<dbReference type="Pfam" id="PF08125">
    <property type="entry name" value="Mannitol_dh_C"/>
    <property type="match status" value="1"/>
</dbReference>
<dbReference type="PRINTS" id="PR00084">
    <property type="entry name" value="MTLDHDRGNASE"/>
</dbReference>
<dbReference type="SUPFAM" id="SSF48179">
    <property type="entry name" value="6-phosphogluconate dehydrogenase C-terminal domain-like"/>
    <property type="match status" value="1"/>
</dbReference>
<dbReference type="SUPFAM" id="SSF51735">
    <property type="entry name" value="NAD(P)-binding Rossmann-fold domains"/>
    <property type="match status" value="1"/>
</dbReference>
<keyword id="KW-0520">NAD</keyword>
<keyword id="KW-0560">Oxidoreductase</keyword>
<keyword id="KW-1185">Reference proteome</keyword>
<gene>
    <name type="ordered locus">Pa_6_10260</name>
    <name type="ORF">PODANS_6_10260</name>
</gene>
<name>MTLD_PODAN</name>